<reference key="1">
    <citation type="journal article" date="1993" name="Gene">
        <title>Structural organization of the genes encoding human and murine FK506-binding protein (FKBP) 13 and comparison to FKBP1.</title>
        <authorList>
            <person name="Hendrickson B.A."/>
            <person name="Zhang W."/>
            <person name="Craig R.J."/>
            <person name="Jin Y.J."/>
            <person name="Bierer R.E."/>
            <person name="Burakoff S.J."/>
            <person name="Dilella A.G."/>
        </authorList>
    </citation>
    <scope>NUCLEOTIDE SEQUENCE [GENOMIC DNA]</scope>
    <source>
        <strain>129/SvJ</strain>
        <tissue>Liver</tissue>
    </source>
</reference>
<reference key="2">
    <citation type="journal article" date="2004" name="Genome Res.">
        <title>The status, quality, and expansion of the NIH full-length cDNA project: the Mammalian Gene Collection (MGC).</title>
        <authorList>
            <consortium name="The MGC Project Team"/>
        </authorList>
    </citation>
    <scope>NUCLEOTIDE SEQUENCE [LARGE SCALE MRNA]</scope>
    <source>
        <strain>FVB/N</strain>
        <tissue>Colon</tissue>
        <tissue>Liver</tissue>
    </source>
</reference>
<reference key="3">
    <citation type="journal article" date="1998" name="J. Cell Biol.">
        <title>The 13-kD FK506 binding protein, FKBP13, interacts with a novel homologue of the erythrocyte membrane cytoskeletal protein 4.1.</title>
        <authorList>
            <person name="Walensky L.D."/>
            <person name="Gascard P."/>
            <person name="Fields M.E."/>
            <person name="Blackshaw S."/>
            <person name="Conboy J.G."/>
            <person name="Mohandas N."/>
            <person name="Snyder S.H."/>
        </authorList>
    </citation>
    <scope>INTERACTION WITH EPB41L2</scope>
</reference>
<reference key="4">
    <citation type="journal article" date="2010" name="Cell">
        <title>A tissue-specific atlas of mouse protein phosphorylation and expression.</title>
        <authorList>
            <person name="Huttlin E.L."/>
            <person name="Jedrychowski M.P."/>
            <person name="Elias J.E."/>
            <person name="Goswami T."/>
            <person name="Rad R."/>
            <person name="Beausoleil S.A."/>
            <person name="Villen J."/>
            <person name="Haas W."/>
            <person name="Sowa M.E."/>
            <person name="Gygi S.P."/>
        </authorList>
    </citation>
    <scope>IDENTIFICATION BY MASS SPECTROMETRY [LARGE SCALE ANALYSIS]</scope>
    <source>
        <tissue>Brain</tissue>
        <tissue>Brown adipose tissue</tissue>
        <tissue>Heart</tissue>
        <tissue>Kidney</tissue>
        <tissue>Liver</tissue>
        <tissue>Lung</tissue>
        <tissue>Pancreas</tissue>
        <tissue>Spleen</tissue>
        <tissue>Testis</tissue>
    </source>
</reference>
<accession>P45878</accession>
<name>FKBP2_MOUSE</name>
<evidence type="ECO:0000255" key="1"/>
<evidence type="ECO:0000255" key="2">
    <source>
        <dbReference type="PROSITE-ProRule" id="PRU00277"/>
    </source>
</evidence>
<evidence type="ECO:0000269" key="3">
    <source>
    </source>
</evidence>
<evidence type="ECO:0000305" key="4"/>
<feature type="signal peptide" evidence="1">
    <location>
        <begin position="1"/>
        <end position="22"/>
    </location>
</feature>
<feature type="chain" id="PRO_0000025507" description="Peptidyl-prolyl cis-trans isomerase FKBP2">
    <location>
        <begin position="23"/>
        <end position="140"/>
    </location>
</feature>
<feature type="domain" description="PPIase FKBP-type" evidence="2">
    <location>
        <begin position="47"/>
        <end position="135"/>
    </location>
</feature>
<feature type="short sequence motif" description="Prevents secretion from ER" evidence="1">
    <location>
        <begin position="137"/>
        <end position="140"/>
    </location>
</feature>
<protein>
    <recommendedName>
        <fullName>Peptidyl-prolyl cis-trans isomerase FKBP2</fullName>
        <shortName>PPIase FKBP2</shortName>
        <ecNumber>5.2.1.8</ecNumber>
    </recommendedName>
    <alternativeName>
        <fullName>13 kDa FK506-binding protein</fullName>
        <shortName>13 kDa FKBP</shortName>
        <shortName>FKBP-13</shortName>
    </alternativeName>
    <alternativeName>
        <fullName>FK506-binding protein 2</fullName>
        <shortName>FKBP-2</shortName>
    </alternativeName>
    <alternativeName>
        <fullName>Immunophilin FKBP13</fullName>
    </alternativeName>
    <alternativeName>
        <fullName>Rotamase</fullName>
    </alternativeName>
</protein>
<sequence length="140" mass="15344">MRLSWILTILSICLSALAAATGAEGKRKLQIGVKKRVDHCPIKSRKGDVLHMHYTGKLEDGTEFDSSLPQNQPFVFSLGTGQVIKGWDQGLLGMCEGEKRKLVIPSELGYGERGAPPKIPGGATLVFEVELLKIERRSEL</sequence>
<gene>
    <name type="primary">Fkbp2</name>
    <name type="synonym">Fkbp13</name>
</gene>
<comment type="function">
    <text>PPIases accelerate the folding of proteins. It catalyzes the cis-trans isomerization of proline imidic peptide bonds in oligopeptides.</text>
</comment>
<comment type="catalytic activity">
    <reaction>
        <text>[protein]-peptidylproline (omega=180) = [protein]-peptidylproline (omega=0)</text>
        <dbReference type="Rhea" id="RHEA:16237"/>
        <dbReference type="Rhea" id="RHEA-COMP:10747"/>
        <dbReference type="Rhea" id="RHEA-COMP:10748"/>
        <dbReference type="ChEBI" id="CHEBI:83833"/>
        <dbReference type="ChEBI" id="CHEBI:83834"/>
        <dbReference type="EC" id="5.2.1.8"/>
    </reaction>
</comment>
<comment type="activity regulation">
    <text>Inhibited by both FK506 and rapamycin.</text>
</comment>
<comment type="subunit">
    <text evidence="3">Interacts with ARFGEF1/BIG1 and the C-terminal of EPB41L2.</text>
</comment>
<comment type="subcellular location">
    <subcellularLocation>
        <location evidence="4">Endoplasmic reticulum membrane</location>
        <topology evidence="4">Peripheral membrane protein</topology>
    </subcellularLocation>
</comment>
<comment type="similarity">
    <text evidence="4">Belongs to the FKBP-type PPIase family. FKBP2 subfamily.</text>
</comment>
<keyword id="KW-0256">Endoplasmic reticulum</keyword>
<keyword id="KW-0413">Isomerase</keyword>
<keyword id="KW-0472">Membrane</keyword>
<keyword id="KW-1185">Reference proteome</keyword>
<keyword id="KW-0697">Rotamase</keyword>
<keyword id="KW-0732">Signal</keyword>
<organism>
    <name type="scientific">Mus musculus</name>
    <name type="common">Mouse</name>
    <dbReference type="NCBI Taxonomy" id="10090"/>
    <lineage>
        <taxon>Eukaryota</taxon>
        <taxon>Metazoa</taxon>
        <taxon>Chordata</taxon>
        <taxon>Craniata</taxon>
        <taxon>Vertebrata</taxon>
        <taxon>Euteleostomi</taxon>
        <taxon>Mammalia</taxon>
        <taxon>Eutheria</taxon>
        <taxon>Euarchontoglires</taxon>
        <taxon>Glires</taxon>
        <taxon>Rodentia</taxon>
        <taxon>Myomorpha</taxon>
        <taxon>Muroidea</taxon>
        <taxon>Muridae</taxon>
        <taxon>Murinae</taxon>
        <taxon>Mus</taxon>
        <taxon>Mus</taxon>
    </lineage>
</organism>
<dbReference type="EC" id="5.2.1.8"/>
<dbReference type="EMBL" id="M77831">
    <property type="protein sequence ID" value="AAA37631.1"/>
    <property type="molecule type" value="Genomic_DNA"/>
</dbReference>
<dbReference type="EMBL" id="BC031824">
    <property type="protein sequence ID" value="AAH31824.1"/>
    <property type="molecule type" value="mRNA"/>
</dbReference>
<dbReference type="EMBL" id="BC053692">
    <property type="protein sequence ID" value="AAH53692.1"/>
    <property type="molecule type" value="mRNA"/>
</dbReference>
<dbReference type="CCDS" id="CCDS29515.1"/>
<dbReference type="PIR" id="I49668">
    <property type="entry name" value="I49668"/>
</dbReference>
<dbReference type="RefSeq" id="NP_001159840.1">
    <property type="nucleotide sequence ID" value="NM_001166368.2"/>
</dbReference>
<dbReference type="RefSeq" id="NP_001347215.1">
    <property type="nucleotide sequence ID" value="NM_001360286.1"/>
</dbReference>
<dbReference type="RefSeq" id="NP_001347217.1">
    <property type="nucleotide sequence ID" value="NM_001360288.1"/>
</dbReference>
<dbReference type="RefSeq" id="NP_032046.1">
    <property type="nucleotide sequence ID" value="NM_008020.4"/>
</dbReference>
<dbReference type="RefSeq" id="XP_006526736.1">
    <property type="nucleotide sequence ID" value="XM_006526673.1"/>
</dbReference>
<dbReference type="RefSeq" id="XP_006526737.1">
    <property type="nucleotide sequence ID" value="XM_006526674.1"/>
</dbReference>
<dbReference type="RefSeq" id="XP_006526738.1">
    <property type="nucleotide sequence ID" value="XM_006526675.2"/>
</dbReference>
<dbReference type="SMR" id="P45878"/>
<dbReference type="BioGRID" id="199684">
    <property type="interactions" value="7"/>
</dbReference>
<dbReference type="FunCoup" id="P45878">
    <property type="interactions" value="1648"/>
</dbReference>
<dbReference type="STRING" id="10090.ENSMUSP00000136438"/>
<dbReference type="iPTMnet" id="P45878"/>
<dbReference type="PhosphoSitePlus" id="P45878"/>
<dbReference type="SwissPalm" id="P45878"/>
<dbReference type="jPOST" id="P45878"/>
<dbReference type="PaxDb" id="10090-ENSMUSP00000066839"/>
<dbReference type="PeptideAtlas" id="P45878"/>
<dbReference type="ProteomicsDB" id="267477"/>
<dbReference type="Pumba" id="P45878"/>
<dbReference type="DNASU" id="14227"/>
<dbReference type="Ensembl" id="ENSMUST00000070878.9">
    <property type="protein sequence ID" value="ENSMUSP00000066839.9"/>
    <property type="gene ID" value="ENSMUSG00000056629.17"/>
</dbReference>
<dbReference type="Ensembl" id="ENSMUST00000177752.9">
    <property type="protein sequence ID" value="ENSMUSP00000136438.2"/>
    <property type="gene ID" value="ENSMUSG00000056629.17"/>
</dbReference>
<dbReference type="GeneID" id="14227"/>
<dbReference type="KEGG" id="mmu:14227"/>
<dbReference type="UCSC" id="uc008gjt.2">
    <property type="organism name" value="mouse"/>
</dbReference>
<dbReference type="AGR" id="MGI:95542"/>
<dbReference type="CTD" id="2286"/>
<dbReference type="MGI" id="MGI:95542">
    <property type="gene designation" value="Fkbp2"/>
</dbReference>
<dbReference type="VEuPathDB" id="HostDB:ENSMUSG00000056629"/>
<dbReference type="eggNOG" id="KOG0549">
    <property type="taxonomic scope" value="Eukaryota"/>
</dbReference>
<dbReference type="GeneTree" id="ENSGT01120000278123"/>
<dbReference type="HOGENOM" id="CLU_013615_8_2_1"/>
<dbReference type="InParanoid" id="P45878"/>
<dbReference type="OMA" id="VHMHYTG"/>
<dbReference type="PhylomeDB" id="P45878"/>
<dbReference type="TreeFam" id="TF105292"/>
<dbReference type="BioGRID-ORCS" id="14227">
    <property type="hits" value="3 hits in 77 CRISPR screens"/>
</dbReference>
<dbReference type="ChiTaRS" id="Fkbp2">
    <property type="organism name" value="mouse"/>
</dbReference>
<dbReference type="PRO" id="PR:P45878"/>
<dbReference type="Proteomes" id="UP000000589">
    <property type="component" value="Chromosome 19"/>
</dbReference>
<dbReference type="RNAct" id="P45878">
    <property type="molecule type" value="protein"/>
</dbReference>
<dbReference type="Bgee" id="ENSMUSG00000056629">
    <property type="expression patterns" value="Expressed in seminal vesicle and 262 other cell types or tissues"/>
</dbReference>
<dbReference type="ExpressionAtlas" id="P45878">
    <property type="expression patterns" value="baseline and differential"/>
</dbReference>
<dbReference type="GO" id="GO:0005789">
    <property type="term" value="C:endoplasmic reticulum membrane"/>
    <property type="evidence" value="ECO:0007669"/>
    <property type="project" value="UniProtKB-SubCell"/>
</dbReference>
<dbReference type="GO" id="GO:0003755">
    <property type="term" value="F:peptidyl-prolyl cis-trans isomerase activity"/>
    <property type="evidence" value="ECO:0007669"/>
    <property type="project" value="UniProtKB-KW"/>
</dbReference>
<dbReference type="GO" id="GO:0061077">
    <property type="term" value="P:chaperone-mediated protein folding"/>
    <property type="evidence" value="ECO:0007669"/>
    <property type="project" value="InterPro"/>
</dbReference>
<dbReference type="FunFam" id="3.10.50.40:FF:000016">
    <property type="entry name" value="Peptidylprolyl isomerase"/>
    <property type="match status" value="1"/>
</dbReference>
<dbReference type="Gene3D" id="3.10.50.40">
    <property type="match status" value="1"/>
</dbReference>
<dbReference type="InterPro" id="IPR044609">
    <property type="entry name" value="FKBP2/11"/>
</dbReference>
<dbReference type="InterPro" id="IPR046357">
    <property type="entry name" value="PPIase_dom_sf"/>
</dbReference>
<dbReference type="InterPro" id="IPR001179">
    <property type="entry name" value="PPIase_FKBP_dom"/>
</dbReference>
<dbReference type="PANTHER" id="PTHR45779:SF3">
    <property type="entry name" value="PEPTIDYL-PROLYL CIS-TRANS ISOMERASE FKBP2"/>
    <property type="match status" value="1"/>
</dbReference>
<dbReference type="PANTHER" id="PTHR45779">
    <property type="entry name" value="PEPTIDYLPROLYL ISOMERASE"/>
    <property type="match status" value="1"/>
</dbReference>
<dbReference type="Pfam" id="PF00254">
    <property type="entry name" value="FKBP_C"/>
    <property type="match status" value="1"/>
</dbReference>
<dbReference type="SUPFAM" id="SSF54534">
    <property type="entry name" value="FKBP-like"/>
    <property type="match status" value="1"/>
</dbReference>
<dbReference type="PROSITE" id="PS50059">
    <property type="entry name" value="FKBP_PPIASE"/>
    <property type="match status" value="1"/>
</dbReference>
<proteinExistence type="evidence at protein level"/>